<evidence type="ECO:0000250" key="1">
    <source>
        <dbReference type="UniProtKB" id="A0A1S4NYE3"/>
    </source>
</evidence>
<evidence type="ECO:0000250" key="2">
    <source>
        <dbReference type="UniProtKB" id="Q3YL96"/>
    </source>
</evidence>
<evidence type="ECO:0000269" key="3">
    <source>
    </source>
</evidence>
<evidence type="ECO:0000269" key="4">
    <source>
    </source>
</evidence>
<evidence type="ECO:0000269" key="5">
    <source>
    </source>
</evidence>
<evidence type="ECO:0000303" key="6">
    <source>
    </source>
</evidence>
<evidence type="ECO:0000305" key="7"/>
<evidence type="ECO:0000305" key="8">
    <source>
    </source>
</evidence>
<accession>E0SDG8</accession>
<name>CDIA_DICD3</name>
<keyword id="KW-0378">Hydrolase</keyword>
<keyword id="KW-0540">Nuclease</keyword>
<keyword id="KW-1185">Reference proteome</keyword>
<keyword id="KW-1266">Target cell cytoplasm</keyword>
<keyword id="KW-0800">Toxin</keyword>
<keyword id="KW-0808">Transferase</keyword>
<keyword id="KW-0843">Virulence</keyword>
<gene>
    <name evidence="6" type="primary">cdiA</name>
    <name type="synonym">hecA2</name>
    <name type="ordered locus">Dda3937_02098</name>
</gene>
<organism>
    <name type="scientific">Dickeya dadantii (strain 3937)</name>
    <name type="common">Erwinia chrysanthemi (strain 3937)</name>
    <dbReference type="NCBI Taxonomy" id="198628"/>
    <lineage>
        <taxon>Bacteria</taxon>
        <taxon>Pseudomonadati</taxon>
        <taxon>Pseudomonadota</taxon>
        <taxon>Gammaproteobacteria</taxon>
        <taxon>Enterobacterales</taxon>
        <taxon>Pectobacteriaceae</taxon>
        <taxon>Dickeya</taxon>
    </lineage>
</organism>
<feature type="chain" id="PRO_0000432086" description="Deoxyribonuclease CdiA">
    <location>
        <begin position="1"/>
        <end position="3326"/>
    </location>
</feature>
<feature type="region of interest" description="Two-partner system transport domain (TPS)" evidence="2">
    <location>
        <begin position="36"/>
        <end position="342"/>
    </location>
</feature>
<feature type="region of interest" description="FHA-1" evidence="7">
    <location>
        <begin position="343"/>
        <end position="1396"/>
    </location>
</feature>
<feature type="region of interest" description="Receptor binding domain (RBD)" evidence="1">
    <location>
        <begin position="1397"/>
        <end position="1765"/>
    </location>
</feature>
<feature type="region of interest" description="YP domain" evidence="2">
    <location>
        <begin position="1766"/>
        <end position="1951"/>
    </location>
</feature>
<feature type="region of interest" description="Periplasmic FHA-1 repeat (pFR)" evidence="7">
    <location>
        <begin position="1959"/>
        <end position="2097"/>
    </location>
</feature>
<feature type="region of interest" description="FHA-2" evidence="7">
    <location>
        <begin position="2125"/>
        <end position="2660"/>
    </location>
</feature>
<feature type="region of interest" description="CT domain" evidence="8">
    <location>
        <begin position="3060"/>
        <end position="3326"/>
    </location>
</feature>
<feature type="short sequence motif" description="VENN CT cleavage motif" evidence="7">
    <location>
        <begin position="3060"/>
        <end position="3063"/>
    </location>
</feature>
<comment type="function">
    <text evidence="3 4 5">Toxic component of a toxin-immunity protein module, which functions as a cellular contact-dependent growth inhibition (CDI) system. CDI modules allow bacteria to communicate with and inhibit the growth of closely related neighboring bacteria in a contact-dependent fashion. CDI is neutralized by its cognate immunity protein CdiI, but not by non-cognate CdiI from other bacteria. The C-terminal domain (CT) has strong DNase activity; this activity is inhibited by cognate CdiI.</text>
</comment>
<comment type="function">
    <text evidence="7">The CdiA protein is thought to be exported from the cell through the central lumen of CdiB, the other half of its two-partner system (TPS). The TPS domain probably remains associated with CdiB while the FHA-1 domain forms an extended filament with the receptor-binding domain (RBD) at its extremity; in the secretion arrested state the C-terminus of the RBD and YP domains form a hairpin-like structure as the FHA-2, PT and CT domains are periplasmic. The YP domain is probably responsible for this arrest at the point where it re-enters the host cell periplasm. Upon binding to a target cell outer membrane receptor a signal is transmitted to activate secretion. The filament elongates slightly, the rest of CdiA is secreted and the FHA-2 domain becomes stably associated with the target cell's outer membrane where it facilitates entry of the toxic CT domain into the target cell periplasm. From there the toxic CT domain is cleaved and gains access to the target cell cytoplasm via an inner membrane protein.</text>
</comment>
<comment type="subunit">
    <text evidence="3">The C-terminal (CT) domain interacts with cognate CdiI but not non-cognate CdiI from E.coli strain 536 / UPEC.</text>
</comment>
<comment type="subcellular location">
    <subcellularLocation>
        <location evidence="4 5">Target cell</location>
        <location evidence="4 5">Target cell cytoplasm</location>
    </subcellularLocation>
    <text evidence="4 5 7">In mixing experiments where target cells lack cdiI the DNase activity can be detected in target cells as a loss of DAPI staining (PubMed:23469034). Secreted to the cell surface by CdiB, its two partner secretion pathway (TPS) partner (Probable). Toxin translocation into the target cell depends on the proton motive force of the target cell, but not on tolA or tonB (PubMed:25174572).</text>
</comment>
<comment type="domain">
    <text evidence="3">The CDI activity resides in the approximately 260 residue C-terminal (CT) domain; exchanging the C-terminal (CT) domain and cdiI gene between different strains confers resistance within cognate but not non-cognate systems (i.e. CdiI-3937 neutralizes CdiA-CT from 3937 but not CdiA-CT from E.coli strain 536 / UPEC or EC93 or Y.pestis CO92).</text>
</comment>
<comment type="miscellaneous">
    <text evidence="6">There are 2 cdiBAI loci in this strain, this is locus 2.</text>
</comment>
<comment type="similarity">
    <text evidence="7">In the N-terminal section; belongs to the CdiA toxin family.</text>
</comment>
<dbReference type="EC" id="3.1.-.-"/>
<dbReference type="EMBL" id="CP002038">
    <property type="protein sequence ID" value="ADM98660.1"/>
    <property type="molecule type" value="Genomic_DNA"/>
</dbReference>
<dbReference type="RefSeq" id="WP_013318106.1">
    <property type="nucleotide sequence ID" value="NC_014500.1"/>
</dbReference>
<dbReference type="STRING" id="198628.Dda3937_02098"/>
<dbReference type="KEGG" id="ddd:Dda3937_02098"/>
<dbReference type="PATRIC" id="fig|198628.6.peg.2438"/>
<dbReference type="eggNOG" id="COG3210">
    <property type="taxonomic scope" value="Bacteria"/>
</dbReference>
<dbReference type="HOGENOM" id="CLU_000043_2_2_6"/>
<dbReference type="Proteomes" id="UP000006859">
    <property type="component" value="Chromosome"/>
</dbReference>
<dbReference type="GO" id="GO:0030430">
    <property type="term" value="C:host cell cytoplasm"/>
    <property type="evidence" value="ECO:0000314"/>
    <property type="project" value="UniProtKB"/>
</dbReference>
<dbReference type="GO" id="GO:0004536">
    <property type="term" value="F:DNA nuclease activity"/>
    <property type="evidence" value="ECO:0000314"/>
    <property type="project" value="UniProtKB"/>
</dbReference>
<dbReference type="GO" id="GO:0090729">
    <property type="term" value="F:toxin activity"/>
    <property type="evidence" value="ECO:0007669"/>
    <property type="project" value="UniProtKB-KW"/>
</dbReference>
<dbReference type="GO" id="GO:0016740">
    <property type="term" value="F:transferase activity"/>
    <property type="evidence" value="ECO:0007669"/>
    <property type="project" value="UniProtKB-KW"/>
</dbReference>
<dbReference type="InterPro" id="IPR010069">
    <property type="entry name" value="CdiA_FHA1_rpt"/>
</dbReference>
<dbReference type="InterPro" id="IPR008619">
    <property type="entry name" value="Filamentous_hemagglutn_rpt"/>
</dbReference>
<dbReference type="InterPro" id="IPR025157">
    <property type="entry name" value="Hemagglutinin_rpt"/>
</dbReference>
<dbReference type="InterPro" id="IPR006914">
    <property type="entry name" value="VENN_dom"/>
</dbReference>
<dbReference type="NCBIfam" id="TIGR01731">
    <property type="entry name" value="fil_hemag_20aa"/>
    <property type="match status" value="23"/>
</dbReference>
<dbReference type="Pfam" id="PF05594">
    <property type="entry name" value="Fil_haemagg"/>
    <property type="match status" value="9"/>
</dbReference>
<dbReference type="Pfam" id="PF13332">
    <property type="entry name" value="Fil_haemagg_2"/>
    <property type="match status" value="4"/>
</dbReference>
<dbReference type="Pfam" id="PF04829">
    <property type="entry name" value="PT-VENN"/>
    <property type="match status" value="1"/>
</dbReference>
<proteinExistence type="evidence at protein level"/>
<protein>
    <recommendedName>
        <fullName evidence="6">Deoxyribonuclease CdiA</fullName>
        <shortName>DNase CdiA</shortName>
        <ecNumber>3.1.-.-</ecNumber>
    </recommendedName>
    <alternativeName>
        <fullName>CdiA-Dd3937</fullName>
    </alternativeName>
    <alternativeName>
        <fullName>Toxin CdiA</fullName>
    </alternativeName>
</protein>
<sequence>MAADTLMVTGAWLSNSGTLQGRQSVGLAVGRDFSQTADGVLTSGGTVTVTAGGVATAGALTAQGLALTAGRWRHQGAVTLGGDGRLVLDELDNGGTLRAGGAWDMQAAALSNGGTLQGGRLALTLSGAAVNRGTLAGERVTLTADSLDNGGTLLGMDALTLAIAGTARNQASGQWLSQGESRLTAGTLDNQGQWQGDSLSVTADRIRNAGQLLGLSALTLTADGTLTNTATGTLLTQGAAVLRAATVDNDGEWQAGRLRLTADSLRNGGRIQSDGALDVALSPAGVLTNTGTLAANGDTTLTPGGLDNRGAVSVRGDLTVTGTDLDNAGQLAARGALTLTGSYAGAGSLYSDAALTLRGTTLANDGGRWQGQTVDIGGGPLTNDGNITGLDSLTVTTTGALTNRGRLAGQTLGITADALDNAGTLLGVDALTLAIAGTARNQTSGQWLSNGAGRLTAGTLDNRGQWQGDSLDATADRLDNAGTLLGLSAMTLTVNGALTNTGRLLTQGAAVLSAATADNDGEWQTGSLWLTADSLRNGGQIHSDGEVRITLPTADGDPLRPTLRAARQLAQDVEAIGAGRLSNTGVLTAGGDGRITGRGLDNAGTLAAGGALTLAAGDLTNAGRLESRTLSLTGDSLDNGGTLLAEQGGELTLGGGLHVGADGRLLSNGDWQVQAGTVTSLGQWQGKTLLLSAASLDNGGALLATDAVTLTLTQGYTGGAGSQVLGSGAVTLTADTVTQQGDIGGDRLALTTGTLTNGGRLVGLSQLDVTSRGQLTNRATGSLLGNGTAGVTAATLDNAGSVQADTLTLTADTVTNAGRMQGTSALTLNGVSRYTGTDGSQLLSGGTATLAIDNADNAGLWQAGELRFRGASLTSRGQITGLDSLTVDAASLTSTGQLTTRGLATLRGQRFDNGGTLTALGGFTARFSDSVTNQGGGQLLSGGTGSLTTGTLVNRGRWQSDRLTLTADTLRNPGTLLGLDDGNIQLTGAYVGEAGSQVGGNGALSLSAATIDQAGQWQARDVTLRATRLRNQGSITGSGQLTATLDEQLENLAGATLLGGTVWLGGATVSNGGQIQGRSGLTVQGGTLLDNQGGGQLLSGGQLALGATQLTNAGWVQGQDLTLTTAQLDNSGTLQAQSGLTLHLPQWTNRGTVQAGQLDITTDGALDNRGTLLGLTRLALQAASLNNADGARLYSAGGLQLRTGQLTQDGQLAALGDLRADIGTPFTFTRTLAAGGQLTLAVTGDLVQAGTLQGHGVTVTSTGTLTQQGRIVAGGGNSTLSAAAISQTESGSIQGGGPLSLRATGNIVNRGFVGTAGDLLVQAGGVMENGSLLYGGGNLQLLSAALVNRFGNILAGGSLWIQRDAAGNASDSVLNSSGTIETQRGDITVRTGTLTNQREGLVVTESGSTAADMPDWVGGTTIYIPVERFEVIKDYLVYSFEHTPGAGSDSPTTYNYFYPFPLSHVSKQEFSASSKIVNIESKGGSSLIHSAGDINIFSSVLVNDASIIASEKNILMNGGVLKNSSYQSGVMSESLIYEYERDDKDDFLPYIEWLWEKTKREEGVSDYDYWEYLSGYNIHAYNRNILTNDRFKYVLKDRQIIFTPGQTYAATIQAGGAITANFSQNISNTNLQPGSGGFMPAMATPTLAGVNALGPVGAQADRGLNGGTAGNVSGSTLSGAGNGVALAGQAGRLNAGYSAVTRDNTASSGSALNPVGIPAGPGTAGGAPVAGASLTPVAPGALALSDLQAALAQGLQQLGSPSLTDYPLPTSQSGLFVADTAGDSRYLIRTNPTLSQLGQVDNALFGDLRGLLGQTPGTTAPVERSPTLTDPTQVLGSSYLLGKLNLDAEHDYRFLGDAAFDTRYISNAVLSQTGQRYLNGVGSELAQMQQLMDNAAAEKSRLNLQLGVSLTPEQVAGLSHSLVWWENITVGGQTVLAPKLYLAQADKTNLQGSRIVANSVSLSAGGDIDNRGSTVTAQDALAVASGGNLTNSEGGLLNAGGALNLVALGNLTNSSATIQGNTVTLASVGGDIVNTTTTDQWQTAARDGRGRGSLTRTDIGQAGLISAQGGLTLQAGHDIALNGAQLSAGGPLQLAAGNDIRLTALSTVTDTVRQDGGATTERRGQGLVQSTVASGGDLSLSAGRDLSGTAAQLSAAGTLALSAGRDLSLLSASEEQFSSNAWKRHLDWQQTVTQQGTVLNAGEGLSLRAGQDLTLQGAQAETRGALTAQAGRDLSLLSATESRHDFFEETTVKKGFLSKTTTHTLRETQQTTEKGTLLSAGSVALTAGHDIGVQGSAVAADGEVTLTAGNDITTAASVETYRNYEEQSRKKSGVFSGGGIGFTIGSTSLRQTLESAGTTQSQSVSTLGSTGGSVRLNAGQAVSMAATDVIAARDIQVTGNSVTIDPGYDTRKQSRQMEQKTAGLTVTLSGVVGSALNSAVQTVQAVREQSDSRLQALQGMKAALSGYQAYQGTQIDTNNQGASSFVGISVSLGAQRSSSSQTSEQSQSFASTLNAGHDISVVARQGDITAVGSQLKAANNVELNASRAINLLSARNTESMTGSNSSSGGNIGVSFGLSNSGAGFSVFANVNAAKGRELGNGNSWSETTVDAGQQIALTSGGDTRLTGAQVSGERIVANVGGDLLLKSQQDSNRYDSKQTSVSAGGSFTFGSMTGSGYLSASQDKMHSSFDSVQQQTGLFAGKGGYDISVGNHTQLDGAVIGSTAGADKNRLDTGTLGFSNIDNRAEFSVSHSGIGLSASPSLSMSDMLKSAALTAPSALMSMGRGGNAGSTTYAAVSDGALIIRNQAGQQQDIAGLSREVEHANNALSPIFDKEKEQKRLQTAQMVGELGAQVMDVIRTEGEIRAVRAAEAKGDVKRPPDNASEKDWDKYKKDLTETPAYKAVMQSYGTGSDLQRATQAATAAIQALAGGGNLQQALAGASAPYLAQLVKGVTMPADESKATASDIAANAMGHALMGAVVAQLSGKDAVAGAVGAAGGELTARLLIMKELYSGRDTSDLTEAEKQSVSALASLAAGLASGIASGNTTGAATGAQAGRNAVENNSLGDIAQAQSEGKTLEQNAGEYVEAENERYKKENCAGLSAEACSVKMYEERREELKETLSTGADFVPVIGDIKSFAEAQSALDYLAAAVGLIPGAGDAAGKAIKAAETALKKGELAEASKLINKASDEIQAVKPLDVGSYKELKDRAVVGDGLEHDHIPSFAALRTAKENELGRKLTPAEEKTLYQNATAVEVPKDVHRAGPTYGGKNTAAQVQQDALDLCGAVCRDTDALRTNMIERGYEPALVDDAVKKIIDRNRQIGVIK</sequence>
<reference key="1">
    <citation type="journal article" date="2011" name="J. Bacteriol.">
        <title>Genome sequence of the plant-pathogenic bacterium Dickeya dadantii 3937.</title>
        <authorList>
            <person name="Glasner J.D."/>
            <person name="Yang C.H."/>
            <person name="Reverchon S."/>
            <person name="Hugouvieux-Cotte-Pattat N."/>
            <person name="Condemine G."/>
            <person name="Bohin J.P."/>
            <person name="Van Gijsegem F."/>
            <person name="Yang S."/>
            <person name="Franza T."/>
            <person name="Expert D."/>
            <person name="Plunkett G. III"/>
            <person name="San Francisco M.J."/>
            <person name="Charkowski A.O."/>
            <person name="Py B."/>
            <person name="Bell K."/>
            <person name="Rauscher L."/>
            <person name="Rodriguez-Palenzuela P."/>
            <person name="Toussaint A."/>
            <person name="Holeva M.C."/>
            <person name="He S.Y."/>
            <person name="Douet V."/>
            <person name="Boccara M."/>
            <person name="Blanco C."/>
            <person name="Toth I."/>
            <person name="Anderson B.D."/>
            <person name="Biehl B.S."/>
            <person name="Mau B."/>
            <person name="Flynn S.M."/>
            <person name="Barras F."/>
            <person name="Lindeberg M."/>
            <person name="Birch P.R."/>
            <person name="Tsuyumu S."/>
            <person name="Shi X."/>
            <person name="Hibbing M."/>
            <person name="Yap M.N."/>
            <person name="Carpentier M."/>
            <person name="Dassa E."/>
            <person name="Umehara M."/>
            <person name="Kim J.F."/>
            <person name="Rusch M."/>
            <person name="Soni P."/>
            <person name="Mayhew G.F."/>
            <person name="Fouts D.E."/>
            <person name="Gill S.R."/>
            <person name="Blattner F.R."/>
            <person name="Keen N.T."/>
            <person name="Perna N.T."/>
        </authorList>
    </citation>
    <scope>NUCLEOTIDE SEQUENCE [LARGE SCALE GENOMIC DNA]</scope>
    <source>
        <strain>3937</strain>
    </source>
</reference>
<reference key="2">
    <citation type="journal article" date="2010" name="Nature">
        <title>A widespread family of polymorphic contact-dependent toxin delivery systems in bacteria.</title>
        <authorList>
            <person name="Aoki S.K."/>
            <person name="Diner E.J."/>
            <person name="de Roodenbeke C.T."/>
            <person name="Burgess B.R."/>
            <person name="Poole S.J."/>
            <person name="Braaten B.A."/>
            <person name="Jones A.M."/>
            <person name="Webb J.S."/>
            <person name="Hayes C.S."/>
            <person name="Cotter P.A."/>
            <person name="Low D.A."/>
        </authorList>
    </citation>
    <scope>FUNCTION</scope>
    <scope>STRAIN SPECIFICITY</scope>
    <scope>INTERACTION WITH CDII</scope>
    <scope>SUBUNIT</scope>
    <scope>DOMAIN</scope>
    <source>
        <strain>3937</strain>
    </source>
</reference>
<reference key="3">
    <citation type="journal article" date="2013" name="PLoS ONE">
        <title>Delivery of CdiA nuclease toxins into target cells during contact-dependent growth inhibition.</title>
        <authorList>
            <person name="Webb J.S."/>
            <person name="Nikolakakis K.C."/>
            <person name="Willett J.L."/>
            <person name="Aoki S.K."/>
            <person name="Hayes C.S."/>
            <person name="Low D.A."/>
        </authorList>
    </citation>
    <scope>FUNCTION</scope>
    <scope>SUBCELLULAR LOCATION</scope>
    <source>
        <strain>3937</strain>
    </source>
</reference>
<reference key="4">
    <citation type="journal article" date="2014" name="Mol. Microbiol.">
        <title>The proton-motive force is required for translocation of CDI toxins across the inner membrane of target bacteria.</title>
        <authorList>
            <person name="Ruhe Z.C."/>
            <person name="Nguyen J.Y."/>
            <person name="Beck C.M."/>
            <person name="Low D.A."/>
            <person name="Hayes C.S."/>
        </authorList>
    </citation>
    <scope>FUNCTION</scope>
    <scope>REQUIRES PMF FOR TRANSLOCATION</scope>
    <scope>SUBCELLULAR LOCATION</scope>
    <source>
        <strain>3937</strain>
    </source>
</reference>
<reference key="5">
    <citation type="journal article" date="2015" name="Proc. Natl. Acad. Sci. U.S.A.">
        <title>Contact-dependent growth inhibition toxins exploit multiple independent cell-entry pathways.</title>
        <authorList>
            <person name="Willett J.L."/>
            <person name="Gucinski G.C."/>
            <person name="Fatherree J.P."/>
            <person name="Low D.A."/>
            <person name="Hayes C.S."/>
        </authorList>
    </citation>
    <scope>RECEPTOR FOR ENTRY INTO TARGET CELL CYTOPLASM</scope>
    <source>
        <strain>3937</strain>
    </source>
</reference>